<evidence type="ECO:0000250" key="1"/>
<evidence type="ECO:0000256" key="2">
    <source>
        <dbReference type="SAM" id="MobiDB-lite"/>
    </source>
</evidence>
<evidence type="ECO:0000305" key="3"/>
<name>H35_STYLE</name>
<organism>
    <name type="scientific">Stylonychia lemnae</name>
    <name type="common">Ciliate</name>
    <dbReference type="NCBI Taxonomy" id="5949"/>
    <lineage>
        <taxon>Eukaryota</taxon>
        <taxon>Sar</taxon>
        <taxon>Alveolata</taxon>
        <taxon>Ciliophora</taxon>
        <taxon>Intramacronucleata</taxon>
        <taxon>Spirotrichea</taxon>
        <taxon>Stichotrichia</taxon>
        <taxon>Sporadotrichida</taxon>
        <taxon>Oxytrichidae</taxon>
        <taxon>Stylonychinae</taxon>
        <taxon>Stylonychia</taxon>
    </lineage>
</organism>
<reference key="1">
    <citation type="journal article" date="1999" name="FEMS Microbiol. Lett.">
        <title>Several highly divergent histone H3 genes are present in the hypotrichous ciliate Stylonychia lemnae.</title>
        <authorList>
            <person name="Bernhard D."/>
        </authorList>
    </citation>
    <scope>NUCLEOTIDE SEQUENCE [GENOMIC DNA]</scope>
</reference>
<protein>
    <recommendedName>
        <fullName>Histone H3-5</fullName>
    </recommendedName>
</protein>
<gene>
    <name type="primary">H3-5</name>
</gene>
<keyword id="KW-0158">Chromosome</keyword>
<keyword id="KW-0238">DNA-binding</keyword>
<keyword id="KW-0544">Nucleosome core</keyword>
<keyword id="KW-0539">Nucleus</keyword>
<accession>P81199</accession>
<sequence length="114" mass="12885">NTGAKAPRKQLANKAARKSTNVNAVSGVKKPHRFRPGTVALREIRRFQKSTELLIRKLPFQRLVREIAQEYKSDLRFQSQAVLALQEAAEAYLVGLFEDTNLCAIHAKRVTIMP</sequence>
<feature type="chain" id="PRO_0000221325" description="Histone H3-5">
    <location>
        <begin position="1" status="less than"/>
        <end position="114" status="greater than"/>
    </location>
</feature>
<feature type="region of interest" description="Disordered" evidence="2">
    <location>
        <begin position="1"/>
        <end position="29"/>
    </location>
</feature>
<feature type="non-terminal residue">
    <location>
        <position position="1"/>
    </location>
</feature>
<feature type="non-terminal residue">
    <location>
        <position position="114"/>
    </location>
</feature>
<dbReference type="EMBL" id="Y16631">
    <property type="protein sequence ID" value="CAA76334.1"/>
    <property type="molecule type" value="Genomic_DNA"/>
</dbReference>
<dbReference type="SMR" id="P81199"/>
<dbReference type="GO" id="GO:0000786">
    <property type="term" value="C:nucleosome"/>
    <property type="evidence" value="ECO:0007669"/>
    <property type="project" value="UniProtKB-KW"/>
</dbReference>
<dbReference type="GO" id="GO:0005634">
    <property type="term" value="C:nucleus"/>
    <property type="evidence" value="ECO:0007669"/>
    <property type="project" value="UniProtKB-SubCell"/>
</dbReference>
<dbReference type="GO" id="GO:0003677">
    <property type="term" value="F:DNA binding"/>
    <property type="evidence" value="ECO:0007669"/>
    <property type="project" value="UniProtKB-KW"/>
</dbReference>
<dbReference type="GO" id="GO:0046982">
    <property type="term" value="F:protein heterodimerization activity"/>
    <property type="evidence" value="ECO:0007669"/>
    <property type="project" value="InterPro"/>
</dbReference>
<dbReference type="GO" id="GO:0030527">
    <property type="term" value="F:structural constituent of chromatin"/>
    <property type="evidence" value="ECO:0007669"/>
    <property type="project" value="InterPro"/>
</dbReference>
<dbReference type="CDD" id="cd22911">
    <property type="entry name" value="HFD_H3"/>
    <property type="match status" value="1"/>
</dbReference>
<dbReference type="FunFam" id="1.10.20.10:FF:000001">
    <property type="entry name" value="Histone H3"/>
    <property type="match status" value="1"/>
</dbReference>
<dbReference type="Gene3D" id="1.10.20.10">
    <property type="entry name" value="Histone, subunit A"/>
    <property type="match status" value="1"/>
</dbReference>
<dbReference type="InterPro" id="IPR009072">
    <property type="entry name" value="Histone-fold"/>
</dbReference>
<dbReference type="InterPro" id="IPR007125">
    <property type="entry name" value="Histone_H2A/H2B/H3"/>
</dbReference>
<dbReference type="InterPro" id="IPR000164">
    <property type="entry name" value="Histone_H3/CENP-A"/>
</dbReference>
<dbReference type="PANTHER" id="PTHR11426">
    <property type="entry name" value="HISTONE H3"/>
    <property type="match status" value="1"/>
</dbReference>
<dbReference type="Pfam" id="PF00125">
    <property type="entry name" value="Histone"/>
    <property type="match status" value="1"/>
</dbReference>
<dbReference type="PRINTS" id="PR00622">
    <property type="entry name" value="HISTONEH3"/>
</dbReference>
<dbReference type="SMART" id="SM00428">
    <property type="entry name" value="H3"/>
    <property type="match status" value="1"/>
</dbReference>
<dbReference type="SUPFAM" id="SSF47113">
    <property type="entry name" value="Histone-fold"/>
    <property type="match status" value="1"/>
</dbReference>
<dbReference type="PROSITE" id="PS00322">
    <property type="entry name" value="HISTONE_H3_1"/>
    <property type="match status" value="1"/>
</dbReference>
<dbReference type="PROSITE" id="PS00959">
    <property type="entry name" value="HISTONE_H3_2"/>
    <property type="match status" value="1"/>
</dbReference>
<comment type="function">
    <text>Core component of nucleosome. Nucleosomes wrap and compact DNA into chromatin, limiting DNA accessibility to the cellular machineries which require DNA as a template. Histones thereby play a central role in transcription regulation, DNA repair, DNA replication and chromosomal stability. DNA accessibility is regulated via a complex set of post-translational modifications of histones, also called histone code, and nucleosome remodeling.</text>
</comment>
<comment type="subunit">
    <text>The nucleosome is a histone octamer containing two molecules each of H2A, H2B, H3 and H4 assembled in one H3-H4 heterotetramer and two H2A-H2B heterodimers. The octamer wraps approximately 147 bp of DNA.</text>
</comment>
<comment type="subcellular location">
    <subcellularLocation>
        <location evidence="1">Nucleus</location>
    </subcellularLocation>
    <subcellularLocation>
        <location evidence="1">Chromosome</location>
    </subcellularLocation>
</comment>
<comment type="similarity">
    <text evidence="3">Belongs to the histone H3 family.</text>
</comment>
<proteinExistence type="inferred from homology"/>